<gene>
    <name evidence="1" type="primary">glyA</name>
    <name type="ordered locus">stu0755</name>
</gene>
<accession>Q5M4W1</accession>
<name>GLYA_STRT2</name>
<sequence length="416" mass="45114">MIFDKEDYKAFDPELWNAIDAEAERQQNNIELIASENVVSKAVMAAQGTLLTNKYAEGYPGKRYYGGTAVIDVVETLAIERAKKLFGVKFANVQPHSGSQANAAVYMSLIQPGDTVMGMDLSAGGHLTHGAPVSFSGKTYNFVSYNVDKESELLDYDAILAQAKEVRPKLIVAGASAYSRIIDFAKFREIADAVGAYLMVDMAHIAGLVASGHHPSPVPYAHVTTTTTHKTLRGPRGGLILTDDEDIAKKLNSAVFPGLQGGPLEHVIAAKAVALKEALDPAFKEYGENVIKNAAAMADVFNQHPDFRVISGGTNNHLFLVDVTKVVENGKVAQNVLEEVNITLNKNSIPYEQLSPFKTSGIRVGSPAITSRGMGEAESRQIAEWMVEALENHDKPEVLERIRGDVKVLTDAFPLY</sequence>
<protein>
    <recommendedName>
        <fullName evidence="1">Serine hydroxymethyltransferase</fullName>
        <shortName evidence="1">SHMT</shortName>
        <shortName evidence="1">Serine methylase</shortName>
        <ecNumber evidence="1">2.1.2.1</ecNumber>
    </recommendedName>
</protein>
<reference key="1">
    <citation type="journal article" date="2004" name="Nat. Biotechnol.">
        <title>Complete sequence and comparative genome analysis of the dairy bacterium Streptococcus thermophilus.</title>
        <authorList>
            <person name="Bolotin A."/>
            <person name="Quinquis B."/>
            <person name="Renault P."/>
            <person name="Sorokin A."/>
            <person name="Ehrlich S.D."/>
            <person name="Kulakauskas S."/>
            <person name="Lapidus A."/>
            <person name="Goltsman E."/>
            <person name="Mazur M."/>
            <person name="Pusch G.D."/>
            <person name="Fonstein M."/>
            <person name="Overbeek R."/>
            <person name="Kyprides N."/>
            <person name="Purnelle B."/>
            <person name="Prozzi D."/>
            <person name="Ngui K."/>
            <person name="Masuy D."/>
            <person name="Hancy F."/>
            <person name="Burteau S."/>
            <person name="Boutry M."/>
            <person name="Delcour J."/>
            <person name="Goffeau A."/>
            <person name="Hols P."/>
        </authorList>
    </citation>
    <scope>NUCLEOTIDE SEQUENCE [LARGE SCALE GENOMIC DNA]</scope>
    <source>
        <strain>ATCC BAA-250 / LMG 18311</strain>
    </source>
</reference>
<feature type="chain" id="PRO_0000235032" description="Serine hydroxymethyltransferase">
    <location>
        <begin position="1"/>
        <end position="416"/>
    </location>
</feature>
<feature type="binding site" evidence="1">
    <location>
        <position position="121"/>
    </location>
    <ligand>
        <name>(6S)-5,6,7,8-tetrahydrofolate</name>
        <dbReference type="ChEBI" id="CHEBI:57453"/>
    </ligand>
</feature>
<feature type="binding site" evidence="1">
    <location>
        <begin position="125"/>
        <end position="127"/>
    </location>
    <ligand>
        <name>(6S)-5,6,7,8-tetrahydrofolate</name>
        <dbReference type="ChEBI" id="CHEBI:57453"/>
    </ligand>
</feature>
<feature type="binding site" evidence="1">
    <location>
        <begin position="355"/>
        <end position="357"/>
    </location>
    <ligand>
        <name>(6S)-5,6,7,8-tetrahydrofolate</name>
        <dbReference type="ChEBI" id="CHEBI:57453"/>
    </ligand>
</feature>
<feature type="site" description="Plays an important role in substrate specificity" evidence="1">
    <location>
        <position position="229"/>
    </location>
</feature>
<feature type="modified residue" description="N6-(pyridoxal phosphate)lysine" evidence="1">
    <location>
        <position position="230"/>
    </location>
</feature>
<feature type="helix" evidence="2">
    <location>
        <begin position="8"/>
        <end position="11"/>
    </location>
</feature>
<feature type="helix" evidence="2">
    <location>
        <begin position="13"/>
        <end position="28"/>
    </location>
</feature>
<feature type="strand" evidence="2">
    <location>
        <begin position="29"/>
        <end position="31"/>
    </location>
</feature>
<feature type="helix" evidence="2">
    <location>
        <begin position="41"/>
        <end position="47"/>
    </location>
</feature>
<feature type="helix" evidence="2">
    <location>
        <begin position="50"/>
        <end position="53"/>
    </location>
</feature>
<feature type="strand" evidence="2">
    <location>
        <begin position="62"/>
        <end position="67"/>
    </location>
</feature>
<feature type="helix" evidence="2">
    <location>
        <begin position="69"/>
        <end position="86"/>
    </location>
</feature>
<feature type="strand" evidence="2">
    <location>
        <begin position="89"/>
        <end position="92"/>
    </location>
</feature>
<feature type="helix" evidence="2">
    <location>
        <begin position="98"/>
        <end position="109"/>
    </location>
</feature>
<feature type="strand" evidence="2">
    <location>
        <begin position="115"/>
        <end position="119"/>
    </location>
</feature>
<feature type="helix" evidence="2">
    <location>
        <begin position="121"/>
        <end position="123"/>
    </location>
</feature>
<feature type="helix" evidence="2">
    <location>
        <begin position="127"/>
        <end position="129"/>
    </location>
</feature>
<feature type="helix" evidence="2">
    <location>
        <begin position="135"/>
        <end position="139"/>
    </location>
</feature>
<feature type="strand" evidence="2">
    <location>
        <begin position="140"/>
        <end position="145"/>
    </location>
</feature>
<feature type="turn" evidence="2">
    <location>
        <begin position="149"/>
        <end position="151"/>
    </location>
</feature>
<feature type="helix" evidence="2">
    <location>
        <begin position="156"/>
        <end position="166"/>
    </location>
</feature>
<feature type="strand" evidence="2">
    <location>
        <begin position="169"/>
        <end position="173"/>
    </location>
</feature>
<feature type="helix" evidence="2">
    <location>
        <begin position="184"/>
        <end position="193"/>
    </location>
</feature>
<feature type="strand" evidence="2">
    <location>
        <begin position="197"/>
        <end position="201"/>
    </location>
</feature>
<feature type="turn" evidence="2">
    <location>
        <begin position="203"/>
        <end position="205"/>
    </location>
</feature>
<feature type="helix" evidence="2">
    <location>
        <begin position="206"/>
        <end position="210"/>
    </location>
</feature>
<feature type="turn" evidence="2">
    <location>
        <begin position="218"/>
        <end position="220"/>
    </location>
</feature>
<feature type="strand" evidence="2">
    <location>
        <begin position="222"/>
        <end position="229"/>
    </location>
</feature>
<feature type="helix" evidence="2">
    <location>
        <begin position="230"/>
        <end position="232"/>
    </location>
</feature>
<feature type="strand" evidence="2">
    <location>
        <begin position="238"/>
        <end position="243"/>
    </location>
</feature>
<feature type="helix" evidence="2">
    <location>
        <begin position="245"/>
        <end position="255"/>
    </location>
</feature>
<feature type="turn" evidence="2">
    <location>
        <begin position="256"/>
        <end position="259"/>
    </location>
</feature>
<feature type="helix" evidence="2">
    <location>
        <begin position="265"/>
        <end position="279"/>
    </location>
</feature>
<feature type="helix" evidence="2">
    <location>
        <begin position="281"/>
        <end position="303"/>
    </location>
</feature>
<feature type="helix" evidence="2">
    <location>
        <begin position="310"/>
        <end position="312"/>
    </location>
</feature>
<feature type="strand" evidence="2">
    <location>
        <begin position="315"/>
        <end position="322"/>
    </location>
</feature>
<feature type="turn" evidence="2">
    <location>
        <begin position="324"/>
        <end position="326"/>
    </location>
</feature>
<feature type="strand" evidence="2">
    <location>
        <begin position="327"/>
        <end position="329"/>
    </location>
</feature>
<feature type="helix" evidence="2">
    <location>
        <begin position="330"/>
        <end position="339"/>
    </location>
</feature>
<feature type="strand" evidence="2">
    <location>
        <begin position="345"/>
        <end position="347"/>
    </location>
</feature>
<feature type="turn" evidence="2">
    <location>
        <begin position="356"/>
        <end position="358"/>
    </location>
</feature>
<feature type="strand" evidence="2">
    <location>
        <begin position="360"/>
        <end position="365"/>
    </location>
</feature>
<feature type="helix" evidence="2">
    <location>
        <begin position="367"/>
        <end position="371"/>
    </location>
</feature>
<feature type="helix" evidence="2">
    <location>
        <begin position="376"/>
        <end position="391"/>
    </location>
</feature>
<feature type="turn" evidence="2">
    <location>
        <begin position="392"/>
        <end position="394"/>
    </location>
</feature>
<feature type="helix" evidence="2">
    <location>
        <begin position="396"/>
        <end position="412"/>
    </location>
</feature>
<dbReference type="EC" id="2.1.2.1" evidence="1"/>
<dbReference type="EMBL" id="CP000023">
    <property type="protein sequence ID" value="AAV60446.1"/>
    <property type="molecule type" value="Genomic_DNA"/>
</dbReference>
<dbReference type="RefSeq" id="WP_011225790.1">
    <property type="nucleotide sequence ID" value="NC_006448.1"/>
</dbReference>
<dbReference type="PDB" id="6TI4">
    <property type="method" value="X-ray"/>
    <property type="resolution" value="1.93 A"/>
    <property type="chains" value="A/C=1-416"/>
</dbReference>
<dbReference type="PDBsum" id="6TI4"/>
<dbReference type="SMR" id="Q5M4W1"/>
<dbReference type="STRING" id="264199.stu0755"/>
<dbReference type="GeneID" id="66898653"/>
<dbReference type="KEGG" id="stl:stu0755"/>
<dbReference type="eggNOG" id="COG0112">
    <property type="taxonomic scope" value="Bacteria"/>
</dbReference>
<dbReference type="HOGENOM" id="CLU_022477_2_1_9"/>
<dbReference type="UniPathway" id="UPA00193"/>
<dbReference type="UniPathway" id="UPA00288">
    <property type="reaction ID" value="UER01023"/>
</dbReference>
<dbReference type="Proteomes" id="UP000001170">
    <property type="component" value="Chromosome"/>
</dbReference>
<dbReference type="GO" id="GO:0005829">
    <property type="term" value="C:cytosol"/>
    <property type="evidence" value="ECO:0007669"/>
    <property type="project" value="TreeGrafter"/>
</dbReference>
<dbReference type="GO" id="GO:0004372">
    <property type="term" value="F:glycine hydroxymethyltransferase activity"/>
    <property type="evidence" value="ECO:0007669"/>
    <property type="project" value="UniProtKB-UniRule"/>
</dbReference>
<dbReference type="GO" id="GO:0030170">
    <property type="term" value="F:pyridoxal phosphate binding"/>
    <property type="evidence" value="ECO:0007669"/>
    <property type="project" value="UniProtKB-UniRule"/>
</dbReference>
<dbReference type="GO" id="GO:0019264">
    <property type="term" value="P:glycine biosynthetic process from serine"/>
    <property type="evidence" value="ECO:0007669"/>
    <property type="project" value="UniProtKB-UniRule"/>
</dbReference>
<dbReference type="GO" id="GO:0035999">
    <property type="term" value="P:tetrahydrofolate interconversion"/>
    <property type="evidence" value="ECO:0007669"/>
    <property type="project" value="UniProtKB-UniRule"/>
</dbReference>
<dbReference type="CDD" id="cd00378">
    <property type="entry name" value="SHMT"/>
    <property type="match status" value="1"/>
</dbReference>
<dbReference type="FunFam" id="3.40.640.10:FF:000001">
    <property type="entry name" value="Serine hydroxymethyltransferase"/>
    <property type="match status" value="1"/>
</dbReference>
<dbReference type="FunFam" id="3.90.1150.10:FF:000072">
    <property type="entry name" value="Serine hydroxymethyltransferase"/>
    <property type="match status" value="1"/>
</dbReference>
<dbReference type="Gene3D" id="3.90.1150.10">
    <property type="entry name" value="Aspartate Aminotransferase, domain 1"/>
    <property type="match status" value="1"/>
</dbReference>
<dbReference type="Gene3D" id="3.40.640.10">
    <property type="entry name" value="Type I PLP-dependent aspartate aminotransferase-like (Major domain)"/>
    <property type="match status" value="1"/>
</dbReference>
<dbReference type="HAMAP" id="MF_00051">
    <property type="entry name" value="SHMT"/>
    <property type="match status" value="1"/>
</dbReference>
<dbReference type="InterPro" id="IPR015424">
    <property type="entry name" value="PyrdxlP-dep_Trfase"/>
</dbReference>
<dbReference type="InterPro" id="IPR015421">
    <property type="entry name" value="PyrdxlP-dep_Trfase_major"/>
</dbReference>
<dbReference type="InterPro" id="IPR015422">
    <property type="entry name" value="PyrdxlP-dep_Trfase_small"/>
</dbReference>
<dbReference type="InterPro" id="IPR001085">
    <property type="entry name" value="Ser_HO-MeTrfase"/>
</dbReference>
<dbReference type="InterPro" id="IPR049943">
    <property type="entry name" value="Ser_HO-MeTrfase-like"/>
</dbReference>
<dbReference type="InterPro" id="IPR019798">
    <property type="entry name" value="Ser_HO-MeTrfase_PLP_BS"/>
</dbReference>
<dbReference type="InterPro" id="IPR039429">
    <property type="entry name" value="SHMT-like_dom"/>
</dbReference>
<dbReference type="NCBIfam" id="NF000586">
    <property type="entry name" value="PRK00011.1"/>
    <property type="match status" value="1"/>
</dbReference>
<dbReference type="PANTHER" id="PTHR11680">
    <property type="entry name" value="SERINE HYDROXYMETHYLTRANSFERASE"/>
    <property type="match status" value="1"/>
</dbReference>
<dbReference type="PANTHER" id="PTHR11680:SF35">
    <property type="entry name" value="SERINE HYDROXYMETHYLTRANSFERASE 1"/>
    <property type="match status" value="1"/>
</dbReference>
<dbReference type="Pfam" id="PF00464">
    <property type="entry name" value="SHMT"/>
    <property type="match status" value="1"/>
</dbReference>
<dbReference type="PIRSF" id="PIRSF000412">
    <property type="entry name" value="SHMT"/>
    <property type="match status" value="1"/>
</dbReference>
<dbReference type="SUPFAM" id="SSF53383">
    <property type="entry name" value="PLP-dependent transferases"/>
    <property type="match status" value="1"/>
</dbReference>
<dbReference type="PROSITE" id="PS00096">
    <property type="entry name" value="SHMT"/>
    <property type="match status" value="1"/>
</dbReference>
<evidence type="ECO:0000255" key="1">
    <source>
        <dbReference type="HAMAP-Rule" id="MF_00051"/>
    </source>
</evidence>
<evidence type="ECO:0007829" key="2">
    <source>
        <dbReference type="PDB" id="6TI4"/>
    </source>
</evidence>
<comment type="function">
    <text evidence="1">Catalyzes the reversible interconversion of serine and glycine with tetrahydrofolate (THF) serving as the one-carbon carrier. This reaction serves as the major source of one-carbon groups required for the biosynthesis of purines, thymidylate, methionine, and other important biomolecules. Also exhibits THF-independent aldolase activity toward beta-hydroxyamino acids, producing glycine and aldehydes, via a retro-aldol mechanism.</text>
</comment>
<comment type="catalytic activity">
    <reaction evidence="1">
        <text>(6R)-5,10-methylene-5,6,7,8-tetrahydrofolate + glycine + H2O = (6S)-5,6,7,8-tetrahydrofolate + L-serine</text>
        <dbReference type="Rhea" id="RHEA:15481"/>
        <dbReference type="ChEBI" id="CHEBI:15377"/>
        <dbReference type="ChEBI" id="CHEBI:15636"/>
        <dbReference type="ChEBI" id="CHEBI:33384"/>
        <dbReference type="ChEBI" id="CHEBI:57305"/>
        <dbReference type="ChEBI" id="CHEBI:57453"/>
        <dbReference type="EC" id="2.1.2.1"/>
    </reaction>
</comment>
<comment type="cofactor">
    <cofactor evidence="1">
        <name>pyridoxal 5'-phosphate</name>
        <dbReference type="ChEBI" id="CHEBI:597326"/>
    </cofactor>
</comment>
<comment type="pathway">
    <text evidence="1">One-carbon metabolism; tetrahydrofolate interconversion.</text>
</comment>
<comment type="pathway">
    <text evidence="1">Amino-acid biosynthesis; glycine biosynthesis; glycine from L-serine: step 1/1.</text>
</comment>
<comment type="subunit">
    <text evidence="1">Homodimer.</text>
</comment>
<comment type="subcellular location">
    <subcellularLocation>
        <location evidence="1">Cytoplasm</location>
    </subcellularLocation>
</comment>
<comment type="similarity">
    <text evidence="1">Belongs to the SHMT family.</text>
</comment>
<proteinExistence type="evidence at protein level"/>
<organism>
    <name type="scientific">Streptococcus thermophilus (strain ATCC BAA-250 / LMG 18311)</name>
    <dbReference type="NCBI Taxonomy" id="264199"/>
    <lineage>
        <taxon>Bacteria</taxon>
        <taxon>Bacillati</taxon>
        <taxon>Bacillota</taxon>
        <taxon>Bacilli</taxon>
        <taxon>Lactobacillales</taxon>
        <taxon>Streptococcaceae</taxon>
        <taxon>Streptococcus</taxon>
    </lineage>
</organism>
<keyword id="KW-0002">3D-structure</keyword>
<keyword id="KW-0028">Amino-acid biosynthesis</keyword>
<keyword id="KW-0963">Cytoplasm</keyword>
<keyword id="KW-0554">One-carbon metabolism</keyword>
<keyword id="KW-0663">Pyridoxal phosphate</keyword>
<keyword id="KW-1185">Reference proteome</keyword>
<keyword id="KW-0808">Transferase</keyword>